<keyword id="KW-0007">Acetylation</keyword>
<keyword id="KW-0963">Cytoplasm</keyword>
<keyword id="KW-0903">Direct protein sequencing</keyword>
<keyword id="KW-0472">Membrane</keyword>
<keyword id="KW-0539">Nucleus</keyword>
<keyword id="KW-0560">Oxidoreductase</keyword>
<keyword id="KW-0597">Phosphoprotein</keyword>
<keyword id="KW-0653">Protein transport</keyword>
<keyword id="KW-1185">Reference proteome</keyword>
<keyword id="KW-0711">Selenium</keyword>
<keyword id="KW-0813">Transport</keyword>
<accession>Q8VIF7</accession>
<proteinExistence type="evidence at protein level"/>
<sequence length="472" mass="52532">MATKCTKCGPGYATPLEAMKGPREEIVYLPCIYRNTGIEAPDYLATVDVDPKSPHYSQVIHRLPMPHLKDELHHSGWNTCSSCFGDSTKSRDKLILPSIISSRIYVVDVGSEPRAPKLHKVIEPNEIHAKCNLGNLHTSHCLASGEVMISSLGDPQGNGKGGFVLLDGETFEVKGTWEKPGGEAPMGYDFWYQPRHNIMVSTEWAAPNVFKDGFNPAHVEAGLYGSHIHVWDWQRHEIIQTLQMKDGLIPLEIRFLHDPDATQGFVGCALSSNIQRFYKNEGGTWSVEKVIQVPSKKVKGWMLPEMPGLITDILLSLDDRFLYFSNWLHGDIRQYDISNPKKPRLTGQIFLGGSIVKGGSVQVLEDQELTCQPEPLVVKGKRVPGGPQMIQLSLDGKRLYVTTSLYSAWDKQFYPNLIREGSVMLQIDVDTANGGLKLNPNFLVDFGKEPLGPALAHELRYPGGDCSSDIWI</sequence>
<protein>
    <recommendedName>
        <fullName evidence="3">Methanethiol oxidase</fullName>
        <shortName evidence="3">MTO</shortName>
        <ecNumber evidence="3">1.8.3.4</ecNumber>
    </recommendedName>
    <alternativeName>
        <fullName>56 kDa selenium-binding protein</fullName>
        <shortName>SBP56</shortName>
        <shortName>SP56</shortName>
    </alternativeName>
    <alternativeName>
        <fullName>Selenium-binding protein 1</fullName>
    </alternativeName>
    <alternativeName>
        <fullName>Selenium-binding protein 2</fullName>
    </alternativeName>
</protein>
<evidence type="ECO:0000250" key="1"/>
<evidence type="ECO:0000250" key="2">
    <source>
        <dbReference type="UniProtKB" id="P17563"/>
    </source>
</evidence>
<evidence type="ECO:0000250" key="3">
    <source>
        <dbReference type="UniProtKB" id="Q13228"/>
    </source>
</evidence>
<evidence type="ECO:0000269" key="4">
    <source>
    </source>
</evidence>
<evidence type="ECO:0000269" key="5">
    <source>
    </source>
</evidence>
<evidence type="ECO:0000269" key="6">
    <source>
    </source>
</evidence>
<evidence type="ECO:0000269" key="7">
    <source>
    </source>
</evidence>
<evidence type="ECO:0000305" key="8"/>
<reference key="1">
    <citation type="submission" date="2000-01" db="EMBL/GenBank/DDBJ databases">
        <title>PCB126-inducible 54 kDa protein in rat liver.</title>
        <authorList>
            <person name="Oguri K."/>
            <person name="Ishida T."/>
            <person name="Noda Y."/>
        </authorList>
    </citation>
    <scope>NUCLEOTIDE SEQUENCE [MRNA]</scope>
    <source>
        <tissue>Liver</tissue>
    </source>
</reference>
<reference key="2">
    <citation type="journal article" date="2004" name="Genome Res.">
        <title>The status, quality, and expansion of the NIH full-length cDNA project: the Mammalian Gene Collection (MGC).</title>
        <authorList>
            <consortium name="The MGC Project Team"/>
        </authorList>
    </citation>
    <scope>NUCLEOTIDE SEQUENCE [LARGE SCALE MRNA]</scope>
    <source>
        <tissue>Lung</tissue>
    </source>
</reference>
<reference key="3">
    <citation type="journal article" date="2004" name="Proteomics">
        <title>Identification of protein targets for mycophenolic acid acyl glucuronide in rat liver and colon tissue.</title>
        <authorList>
            <person name="Shipkova M."/>
            <person name="Beck H."/>
            <person name="Voland A."/>
            <person name="Armstrong V.W."/>
            <person name="Groene H.-J."/>
            <person name="Oellerich M."/>
            <person name="Wieland E."/>
        </authorList>
    </citation>
    <scope>PROTEIN SEQUENCE OF 104-114; 246-254 AND 412-419</scope>
    <scope>TISSUE SPECIFICITY</scope>
    <scope>IDENTIFICATION BY MASS SPECTROMETRY</scope>
    <source>
        <tissue>Liver</tissue>
    </source>
</reference>
<reference key="4">
    <citation type="journal article" date="1996" name="Toxicol. Lett.">
        <title>Significant induction of a 54-kDa protein in rat liver with homologous alignment to mouse selenium binding protein by a coplanar polychlorinated biphenyl, 3,4,5,3',4'-pentachlorobiphenyl and 3-methylcholanthrene.</title>
        <authorList>
            <person name="Ishii Y."/>
            <person name="Hatsumura M."/>
            <person name="Ishida T."/>
            <person name="Ariyoshi N."/>
            <person name="Oguri K."/>
        </authorList>
    </citation>
    <scope>PROTEIN SEQUENCE OF 221-231; 282-294 AND 369-381</scope>
    <scope>INDUCTION</scope>
    <source>
        <tissue>Liver</tissue>
    </source>
</reference>
<reference key="5">
    <citation type="journal article" date="2000" name="J. Biol. Chem.">
        <title>A 56-kDa selenium-binding protein participates in intra-Golgi protein transport.</title>
        <authorList>
            <person name="Porat A."/>
            <person name="Sagiv Y."/>
            <person name="Elazar Z."/>
        </authorList>
    </citation>
    <scope>FUNCTION</scope>
    <scope>SUBCELLULAR LOCATION</scope>
</reference>
<reference key="6">
    <citation type="journal article" date="2007" name="Autophagy">
        <title>Proteomic analysis of membrane-associated proteins from rat liver autophagosomes.</title>
        <authorList>
            <person name="Overbye A."/>
            <person name="Fengsrud M."/>
            <person name="Seglen P.O."/>
        </authorList>
    </citation>
    <scope>IDENTIFICATION BY MASS SPECTROMETRY</scope>
    <scope>SUBCELLULAR LOCATION</scope>
    <scope>FUNCTION</scope>
</reference>
<dbReference type="EC" id="1.8.3.4" evidence="3"/>
<dbReference type="EMBL" id="AB036799">
    <property type="protein sequence ID" value="BAB83134.1"/>
    <property type="molecule type" value="mRNA"/>
</dbReference>
<dbReference type="EMBL" id="BC074008">
    <property type="protein sequence ID" value="AAH74008.1"/>
    <property type="molecule type" value="mRNA"/>
</dbReference>
<dbReference type="RefSeq" id="NP_001316822.1">
    <property type="nucleotide sequence ID" value="NM_001329893.1"/>
</dbReference>
<dbReference type="RefSeq" id="NP_543168.1">
    <property type="nucleotide sequence ID" value="NM_080892.1"/>
</dbReference>
<dbReference type="SMR" id="Q8VIF7"/>
<dbReference type="BioGRID" id="250861">
    <property type="interactions" value="1"/>
</dbReference>
<dbReference type="FunCoup" id="Q8VIF7">
    <property type="interactions" value="1242"/>
</dbReference>
<dbReference type="IntAct" id="Q8VIF7">
    <property type="interactions" value="1"/>
</dbReference>
<dbReference type="STRING" id="10116.ENSRNOP00000064790"/>
<dbReference type="iPTMnet" id="Q8VIF7"/>
<dbReference type="PhosphoSitePlus" id="Q8VIF7"/>
<dbReference type="PaxDb" id="10116-ENSRNOP00000028510"/>
<dbReference type="Ensembl" id="ENSRNOT00000101667.1">
    <property type="protein sequence ID" value="ENSRNOP00000094007.1"/>
    <property type="gene ID" value="ENSRNOG00000047158.3"/>
</dbReference>
<dbReference type="GeneID" id="103689947"/>
<dbReference type="KEGG" id="rno:103689947"/>
<dbReference type="UCSC" id="RGD:620571">
    <property type="organism name" value="rat"/>
</dbReference>
<dbReference type="AGR" id="RGD:620571"/>
<dbReference type="CTD" id="8991"/>
<dbReference type="RGD" id="620571">
    <property type="gene designation" value="Selenbp1"/>
</dbReference>
<dbReference type="eggNOG" id="KOG0918">
    <property type="taxonomic scope" value="Eukaryota"/>
</dbReference>
<dbReference type="GeneTree" id="ENSGT00390000014244"/>
<dbReference type="InParanoid" id="Q8VIF7"/>
<dbReference type="OrthoDB" id="1692at9989"/>
<dbReference type="PhylomeDB" id="Q8VIF7"/>
<dbReference type="PRO" id="PR:Q8VIF7"/>
<dbReference type="Proteomes" id="UP000002494">
    <property type="component" value="Chromosome 2"/>
</dbReference>
<dbReference type="GO" id="GO:0005829">
    <property type="term" value="C:cytosol"/>
    <property type="evidence" value="ECO:0007669"/>
    <property type="project" value="UniProtKB-SubCell"/>
</dbReference>
<dbReference type="GO" id="GO:0001650">
    <property type="term" value="C:fibrillar center"/>
    <property type="evidence" value="ECO:0007669"/>
    <property type="project" value="Ensembl"/>
</dbReference>
<dbReference type="GO" id="GO:0016020">
    <property type="term" value="C:membrane"/>
    <property type="evidence" value="ECO:0007669"/>
    <property type="project" value="UniProtKB-SubCell"/>
</dbReference>
<dbReference type="GO" id="GO:0018549">
    <property type="term" value="F:methanethiol oxidase activity"/>
    <property type="evidence" value="ECO:0000266"/>
    <property type="project" value="RGD"/>
</dbReference>
<dbReference type="GO" id="GO:0008430">
    <property type="term" value="F:selenium binding"/>
    <property type="evidence" value="ECO:0007669"/>
    <property type="project" value="InterPro"/>
</dbReference>
<dbReference type="GO" id="GO:0050873">
    <property type="term" value="P:brown fat cell differentiation"/>
    <property type="evidence" value="ECO:0000266"/>
    <property type="project" value="RGD"/>
</dbReference>
<dbReference type="GO" id="GO:0015031">
    <property type="term" value="P:protein transport"/>
    <property type="evidence" value="ECO:0007669"/>
    <property type="project" value="UniProtKB-KW"/>
</dbReference>
<dbReference type="Gene3D" id="2.130.10.10">
    <property type="entry name" value="YVTN repeat-like/Quinoprotein amine dehydrogenase"/>
    <property type="match status" value="1"/>
</dbReference>
<dbReference type="InterPro" id="IPR008826">
    <property type="entry name" value="Se-bd"/>
</dbReference>
<dbReference type="InterPro" id="IPR015943">
    <property type="entry name" value="WD40/YVTN_repeat-like_dom_sf"/>
</dbReference>
<dbReference type="PANTHER" id="PTHR23300">
    <property type="entry name" value="METHANETHIOL OXIDASE"/>
    <property type="match status" value="1"/>
</dbReference>
<dbReference type="PANTHER" id="PTHR23300:SF0">
    <property type="entry name" value="METHANETHIOL OXIDASE"/>
    <property type="match status" value="1"/>
</dbReference>
<dbReference type="Pfam" id="PF05694">
    <property type="entry name" value="SBP56"/>
    <property type="match status" value="1"/>
</dbReference>
<dbReference type="SUPFAM" id="SSF75011">
    <property type="entry name" value="3-carboxy-cis,cis-mucoante lactonizing enzyme"/>
    <property type="match status" value="1"/>
</dbReference>
<organism>
    <name type="scientific">Rattus norvegicus</name>
    <name type="common">Rat</name>
    <dbReference type="NCBI Taxonomy" id="10116"/>
    <lineage>
        <taxon>Eukaryota</taxon>
        <taxon>Metazoa</taxon>
        <taxon>Chordata</taxon>
        <taxon>Craniata</taxon>
        <taxon>Vertebrata</taxon>
        <taxon>Euteleostomi</taxon>
        <taxon>Mammalia</taxon>
        <taxon>Eutheria</taxon>
        <taxon>Euarchontoglires</taxon>
        <taxon>Glires</taxon>
        <taxon>Rodentia</taxon>
        <taxon>Myomorpha</taxon>
        <taxon>Muroidea</taxon>
        <taxon>Muridae</taxon>
        <taxon>Murinae</taxon>
        <taxon>Rattus</taxon>
    </lineage>
</organism>
<gene>
    <name type="primary">Selenbp1</name>
    <name type="synonym">Sbp</name>
</gene>
<name>SBP1_RAT</name>
<feature type="initiator methionine" description="Removed" evidence="3">
    <location>
        <position position="1"/>
    </location>
</feature>
<feature type="chain" id="PRO_0000289063" description="Methanethiol oxidase">
    <location>
        <begin position="2"/>
        <end position="472"/>
    </location>
</feature>
<feature type="modified residue" description="N-acetylalanine" evidence="3">
    <location>
        <position position="2"/>
    </location>
</feature>
<feature type="modified residue" description="Phosphoserine" evidence="3">
    <location>
        <position position="111"/>
    </location>
</feature>
<feature type="modified residue" description="Phosphoserine" evidence="2">
    <location>
        <position position="467"/>
    </location>
</feature>
<feature type="sequence conflict" description="In Ref. 4; AA sequence." evidence="8" ref="4">
    <location>
        <position position="227"/>
    </location>
</feature>
<feature type="sequence conflict" description="In Ref. 4; AA sequence." evidence="8" ref="4">
    <original>VW</original>
    <variation>RN</variation>
    <location>
        <begin position="230"/>
        <end position="231"/>
    </location>
</feature>
<feature type="sequence conflict" description="In Ref. 4; AA sequence." evidence="8" ref="4">
    <original>G</original>
    <variation>H</variation>
    <location>
        <position position="283"/>
    </location>
</feature>
<feature type="sequence conflict" description="In Ref. 4; AA sequence." evidence="8" ref="4">
    <original>C</original>
    <variation>G</variation>
    <location>
        <position position="371"/>
    </location>
</feature>
<feature type="sequence conflict" description="In Ref. 4; AA sequence." evidence="8" ref="4">
    <original>K</original>
    <variation>P</variation>
    <location>
        <position position="381"/>
    </location>
</feature>
<comment type="function">
    <text evidence="3 4 6">Catalyzes the oxidation of methanethiol, an organosulfur compound known to be produced in substantial amounts by gut bacteria (By similarity). Selenium-binding protein which may be involved in the sensing of reactive xenobiotics in the cytoplasm. May be involved in intra-Golgi protein transport (PubMed:10799528, PubMed:17377489).</text>
</comment>
<comment type="catalytic activity">
    <reaction evidence="3">
        <text>methanethiol + O2 + H2O = hydrogen sulfide + formaldehyde + H2O2 + H(+)</text>
        <dbReference type="Rhea" id="RHEA:11812"/>
        <dbReference type="ChEBI" id="CHEBI:15377"/>
        <dbReference type="ChEBI" id="CHEBI:15378"/>
        <dbReference type="ChEBI" id="CHEBI:15379"/>
        <dbReference type="ChEBI" id="CHEBI:16007"/>
        <dbReference type="ChEBI" id="CHEBI:16240"/>
        <dbReference type="ChEBI" id="CHEBI:16842"/>
        <dbReference type="ChEBI" id="CHEBI:29919"/>
        <dbReference type="EC" id="1.8.3.4"/>
    </reaction>
</comment>
<comment type="pathway">
    <text evidence="3">Organosulfur degradation.</text>
</comment>
<comment type="subunit">
    <text evidence="1">Interacts with USP33.</text>
</comment>
<comment type="subcellular location">
    <subcellularLocation>
        <location evidence="3">Nucleus</location>
    </subcellularLocation>
    <subcellularLocation>
        <location evidence="3">Cytoplasm</location>
        <location evidence="3">Cytosol</location>
    </subcellularLocation>
    <subcellularLocation>
        <location evidence="6">Membrane</location>
        <topology evidence="6">Peripheral membrane protein</topology>
    </subcellularLocation>
    <text evidence="6">May associate with Golgi membrane (PubMed:17377489). May associate with the membrane of autophagosomes (PubMed:17377489).</text>
</comment>
<comment type="tissue specificity">
    <text evidence="5">Present in liver and colon (at protein level).</text>
</comment>
<comment type="induction">
    <text evidence="7">In liver, by 3,4,5,3',4'-pentachlorobiphenyl and 3-methylcholanthrene (at protein level).</text>
</comment>
<comment type="PTM">
    <text>The N-terminus is blocked.</text>
</comment>
<comment type="miscellaneous">
    <text>In vivo target of mycophenolic acid, the active metabolite of the immunosuppressant mycophenolate mofetil.</text>
</comment>
<comment type="similarity">
    <text evidence="8">Belongs to the selenium-binding protein family.</text>
</comment>